<name>GSA_ECO55</name>
<organism>
    <name type="scientific">Escherichia coli (strain 55989 / EAEC)</name>
    <dbReference type="NCBI Taxonomy" id="585055"/>
    <lineage>
        <taxon>Bacteria</taxon>
        <taxon>Pseudomonadati</taxon>
        <taxon>Pseudomonadota</taxon>
        <taxon>Gammaproteobacteria</taxon>
        <taxon>Enterobacterales</taxon>
        <taxon>Enterobacteriaceae</taxon>
        <taxon>Escherichia</taxon>
    </lineage>
</organism>
<sequence>MSKSENLYSAARELIPGGVNSPVRAFTGVGGTPLFIEKADGAYLYDVDGKAYIDYVGSWGPMVLGHNHPAIRNAVIEAAERGLSFGAPTEMEVKMAQLVTELVPTMDMVRMVNSGTEATMSAIRLARGFTGRDKIIKFEGCYHGHADCLLVKAGSGALTLGQPNSPGVPADFAKHTLTCTYNDLASVRAAFEQYPQEIACIIVEPVAGNMNCVPPLPEFLPGLRALCDEFGALLIIDEVMTGFRVALAGAQDYYGVEPDLTCLGKIIGGGMPVGAFGGRRDVMDALAPTGPVYQAGTLSGNPIAMAAGFACLNEVAQPGVHETLDELTSRLAEGLLEAAEEAGIPLVVNHVGGMFGIFFTDAESVTCYQDVMACDVERFKRFFHMMLDEGVYLAPSAFEAGFMSVAHSMEDINNTIDAARRVFAKL</sequence>
<dbReference type="EC" id="5.4.3.8" evidence="1"/>
<dbReference type="EMBL" id="CU928145">
    <property type="protein sequence ID" value="CAU96035.1"/>
    <property type="molecule type" value="Genomic_DNA"/>
</dbReference>
<dbReference type="RefSeq" id="WP_000045290.1">
    <property type="nucleotide sequence ID" value="NC_011748.1"/>
</dbReference>
<dbReference type="SMR" id="B7LGL6"/>
<dbReference type="KEGG" id="eck:EC55989_0148"/>
<dbReference type="HOGENOM" id="CLU_016922_1_5_6"/>
<dbReference type="UniPathway" id="UPA00251">
    <property type="reaction ID" value="UER00317"/>
</dbReference>
<dbReference type="Proteomes" id="UP000000746">
    <property type="component" value="Chromosome"/>
</dbReference>
<dbReference type="GO" id="GO:0005737">
    <property type="term" value="C:cytoplasm"/>
    <property type="evidence" value="ECO:0007669"/>
    <property type="project" value="UniProtKB-SubCell"/>
</dbReference>
<dbReference type="GO" id="GO:0042286">
    <property type="term" value="F:glutamate-1-semialdehyde 2,1-aminomutase activity"/>
    <property type="evidence" value="ECO:0007669"/>
    <property type="project" value="UniProtKB-UniRule"/>
</dbReference>
<dbReference type="GO" id="GO:0030170">
    <property type="term" value="F:pyridoxal phosphate binding"/>
    <property type="evidence" value="ECO:0007669"/>
    <property type="project" value="InterPro"/>
</dbReference>
<dbReference type="GO" id="GO:0008483">
    <property type="term" value="F:transaminase activity"/>
    <property type="evidence" value="ECO:0007669"/>
    <property type="project" value="InterPro"/>
</dbReference>
<dbReference type="GO" id="GO:0006782">
    <property type="term" value="P:protoporphyrinogen IX biosynthetic process"/>
    <property type="evidence" value="ECO:0007669"/>
    <property type="project" value="UniProtKB-UniRule"/>
</dbReference>
<dbReference type="CDD" id="cd00610">
    <property type="entry name" value="OAT_like"/>
    <property type="match status" value="1"/>
</dbReference>
<dbReference type="FunFam" id="3.40.640.10:FF:000021">
    <property type="entry name" value="Glutamate-1-semialdehyde 2,1-aminomutase"/>
    <property type="match status" value="1"/>
</dbReference>
<dbReference type="FunFam" id="3.90.1150.10:FF:000012">
    <property type="entry name" value="Glutamate-1-semialdehyde 2,1-aminomutase"/>
    <property type="match status" value="1"/>
</dbReference>
<dbReference type="Gene3D" id="3.90.1150.10">
    <property type="entry name" value="Aspartate Aminotransferase, domain 1"/>
    <property type="match status" value="1"/>
</dbReference>
<dbReference type="Gene3D" id="3.40.640.10">
    <property type="entry name" value="Type I PLP-dependent aspartate aminotransferase-like (Major domain)"/>
    <property type="match status" value="1"/>
</dbReference>
<dbReference type="HAMAP" id="MF_00375">
    <property type="entry name" value="HemL_aminotrans_3"/>
    <property type="match status" value="1"/>
</dbReference>
<dbReference type="InterPro" id="IPR004639">
    <property type="entry name" value="4pyrrol_synth_GluAld_NH2Trfase"/>
</dbReference>
<dbReference type="InterPro" id="IPR005814">
    <property type="entry name" value="Aminotrans_3"/>
</dbReference>
<dbReference type="InterPro" id="IPR049704">
    <property type="entry name" value="Aminotrans_3_PPA_site"/>
</dbReference>
<dbReference type="InterPro" id="IPR015424">
    <property type="entry name" value="PyrdxlP-dep_Trfase"/>
</dbReference>
<dbReference type="InterPro" id="IPR015421">
    <property type="entry name" value="PyrdxlP-dep_Trfase_major"/>
</dbReference>
<dbReference type="InterPro" id="IPR015422">
    <property type="entry name" value="PyrdxlP-dep_Trfase_small"/>
</dbReference>
<dbReference type="NCBIfam" id="TIGR00713">
    <property type="entry name" value="hemL"/>
    <property type="match status" value="1"/>
</dbReference>
<dbReference type="NCBIfam" id="NF000818">
    <property type="entry name" value="PRK00062.1"/>
    <property type="match status" value="1"/>
</dbReference>
<dbReference type="PANTHER" id="PTHR43713">
    <property type="entry name" value="GLUTAMATE-1-SEMIALDEHYDE 2,1-AMINOMUTASE"/>
    <property type="match status" value="1"/>
</dbReference>
<dbReference type="PANTHER" id="PTHR43713:SF3">
    <property type="entry name" value="GLUTAMATE-1-SEMIALDEHYDE 2,1-AMINOMUTASE 1, CHLOROPLASTIC-RELATED"/>
    <property type="match status" value="1"/>
</dbReference>
<dbReference type="Pfam" id="PF00202">
    <property type="entry name" value="Aminotran_3"/>
    <property type="match status" value="1"/>
</dbReference>
<dbReference type="SUPFAM" id="SSF53383">
    <property type="entry name" value="PLP-dependent transferases"/>
    <property type="match status" value="1"/>
</dbReference>
<dbReference type="PROSITE" id="PS00600">
    <property type="entry name" value="AA_TRANSFER_CLASS_3"/>
    <property type="match status" value="1"/>
</dbReference>
<protein>
    <recommendedName>
        <fullName evidence="1">Glutamate-1-semialdehyde 2,1-aminomutase</fullName>
        <shortName evidence="1">GSA</shortName>
        <ecNumber evidence="1">5.4.3.8</ecNumber>
    </recommendedName>
    <alternativeName>
        <fullName evidence="1">Glutamate-1-semialdehyde aminotransferase</fullName>
        <shortName evidence="1">GSA-AT</shortName>
    </alternativeName>
</protein>
<accession>B7LGL6</accession>
<evidence type="ECO:0000255" key="1">
    <source>
        <dbReference type="HAMAP-Rule" id="MF_00375"/>
    </source>
</evidence>
<comment type="catalytic activity">
    <reaction evidence="1">
        <text>(S)-4-amino-5-oxopentanoate = 5-aminolevulinate</text>
        <dbReference type="Rhea" id="RHEA:14265"/>
        <dbReference type="ChEBI" id="CHEBI:57501"/>
        <dbReference type="ChEBI" id="CHEBI:356416"/>
        <dbReference type="EC" id="5.4.3.8"/>
    </reaction>
</comment>
<comment type="cofactor">
    <cofactor evidence="1">
        <name>pyridoxal 5'-phosphate</name>
        <dbReference type="ChEBI" id="CHEBI:597326"/>
    </cofactor>
</comment>
<comment type="pathway">
    <text evidence="1">Porphyrin-containing compound metabolism; protoporphyrin-IX biosynthesis; 5-aminolevulinate from L-glutamyl-tRNA(Glu): step 2/2.</text>
</comment>
<comment type="subunit">
    <text evidence="1">Homodimer.</text>
</comment>
<comment type="subcellular location">
    <subcellularLocation>
        <location evidence="1">Cytoplasm</location>
    </subcellularLocation>
</comment>
<comment type="similarity">
    <text evidence="1">Belongs to the class-III pyridoxal-phosphate-dependent aminotransferase family. HemL subfamily.</text>
</comment>
<proteinExistence type="inferred from homology"/>
<keyword id="KW-0963">Cytoplasm</keyword>
<keyword id="KW-0413">Isomerase</keyword>
<keyword id="KW-0627">Porphyrin biosynthesis</keyword>
<keyword id="KW-0663">Pyridoxal phosphate</keyword>
<keyword id="KW-1185">Reference proteome</keyword>
<gene>
    <name evidence="1" type="primary">hemL</name>
    <name type="ordered locus">EC55989_0148</name>
</gene>
<reference key="1">
    <citation type="journal article" date="2009" name="PLoS Genet.">
        <title>Organised genome dynamics in the Escherichia coli species results in highly diverse adaptive paths.</title>
        <authorList>
            <person name="Touchon M."/>
            <person name="Hoede C."/>
            <person name="Tenaillon O."/>
            <person name="Barbe V."/>
            <person name="Baeriswyl S."/>
            <person name="Bidet P."/>
            <person name="Bingen E."/>
            <person name="Bonacorsi S."/>
            <person name="Bouchier C."/>
            <person name="Bouvet O."/>
            <person name="Calteau A."/>
            <person name="Chiapello H."/>
            <person name="Clermont O."/>
            <person name="Cruveiller S."/>
            <person name="Danchin A."/>
            <person name="Diard M."/>
            <person name="Dossat C."/>
            <person name="Karoui M.E."/>
            <person name="Frapy E."/>
            <person name="Garry L."/>
            <person name="Ghigo J.M."/>
            <person name="Gilles A.M."/>
            <person name="Johnson J."/>
            <person name="Le Bouguenec C."/>
            <person name="Lescat M."/>
            <person name="Mangenot S."/>
            <person name="Martinez-Jehanne V."/>
            <person name="Matic I."/>
            <person name="Nassif X."/>
            <person name="Oztas S."/>
            <person name="Petit M.A."/>
            <person name="Pichon C."/>
            <person name="Rouy Z."/>
            <person name="Ruf C.S."/>
            <person name="Schneider D."/>
            <person name="Tourret J."/>
            <person name="Vacherie B."/>
            <person name="Vallenet D."/>
            <person name="Medigue C."/>
            <person name="Rocha E.P.C."/>
            <person name="Denamur E."/>
        </authorList>
    </citation>
    <scope>NUCLEOTIDE SEQUENCE [LARGE SCALE GENOMIC DNA]</scope>
    <source>
        <strain>55989 / EAEC</strain>
    </source>
</reference>
<feature type="chain" id="PRO_1000201018" description="Glutamate-1-semialdehyde 2,1-aminomutase">
    <location>
        <begin position="1"/>
        <end position="426"/>
    </location>
</feature>
<feature type="modified residue" description="N6-(pyridoxal phosphate)lysine" evidence="1">
    <location>
        <position position="265"/>
    </location>
</feature>